<gene>
    <name evidence="1" type="primary">argS</name>
    <name type="ordered locus">Lm4b_02529</name>
</gene>
<proteinExistence type="inferred from homology"/>
<accession>C1KYX7</accession>
<organism>
    <name type="scientific">Listeria monocytogenes serotype 4b (strain CLIP80459)</name>
    <dbReference type="NCBI Taxonomy" id="568819"/>
    <lineage>
        <taxon>Bacteria</taxon>
        <taxon>Bacillati</taxon>
        <taxon>Bacillota</taxon>
        <taxon>Bacilli</taxon>
        <taxon>Bacillales</taxon>
        <taxon>Listeriaceae</taxon>
        <taxon>Listeria</taxon>
    </lineage>
</organism>
<keyword id="KW-0030">Aminoacyl-tRNA synthetase</keyword>
<keyword id="KW-0067">ATP-binding</keyword>
<keyword id="KW-0963">Cytoplasm</keyword>
<keyword id="KW-0436">Ligase</keyword>
<keyword id="KW-0547">Nucleotide-binding</keyword>
<keyword id="KW-0648">Protein biosynthesis</keyword>
<name>SYR_LISMC</name>
<evidence type="ECO:0000255" key="1">
    <source>
        <dbReference type="HAMAP-Rule" id="MF_00123"/>
    </source>
</evidence>
<reference key="1">
    <citation type="journal article" date="2012" name="BMC Genomics">
        <title>Comparative genomics and transcriptomics of lineages I, II, and III strains of Listeria monocytogenes.</title>
        <authorList>
            <person name="Hain T."/>
            <person name="Ghai R."/>
            <person name="Billion A."/>
            <person name="Kuenne C.T."/>
            <person name="Steinweg C."/>
            <person name="Izar B."/>
            <person name="Mohamed W."/>
            <person name="Mraheil M."/>
            <person name="Domann E."/>
            <person name="Schaffrath S."/>
            <person name="Karst U."/>
            <person name="Goesmann A."/>
            <person name="Oehm S."/>
            <person name="Puhler A."/>
            <person name="Merkl R."/>
            <person name="Vorwerk S."/>
            <person name="Glaser P."/>
            <person name="Garrido P."/>
            <person name="Rusniok C."/>
            <person name="Buchrieser C."/>
            <person name="Goebel W."/>
            <person name="Chakraborty T."/>
        </authorList>
    </citation>
    <scope>NUCLEOTIDE SEQUENCE [LARGE SCALE GENOMIC DNA]</scope>
    <source>
        <strain>CLIP80459</strain>
    </source>
</reference>
<dbReference type="EC" id="6.1.1.19" evidence="1"/>
<dbReference type="EMBL" id="FM242711">
    <property type="protein sequence ID" value="CAS06284.1"/>
    <property type="molecule type" value="Genomic_DNA"/>
</dbReference>
<dbReference type="RefSeq" id="WP_003726104.1">
    <property type="nucleotide sequence ID" value="NC_012488.1"/>
</dbReference>
<dbReference type="SMR" id="C1KYX7"/>
<dbReference type="KEGG" id="lmc:Lm4b_02529"/>
<dbReference type="HOGENOM" id="CLU_006406_0_1_9"/>
<dbReference type="GO" id="GO:0005737">
    <property type="term" value="C:cytoplasm"/>
    <property type="evidence" value="ECO:0007669"/>
    <property type="project" value="UniProtKB-SubCell"/>
</dbReference>
<dbReference type="GO" id="GO:0004814">
    <property type="term" value="F:arginine-tRNA ligase activity"/>
    <property type="evidence" value="ECO:0007669"/>
    <property type="project" value="UniProtKB-UniRule"/>
</dbReference>
<dbReference type="GO" id="GO:0005524">
    <property type="term" value="F:ATP binding"/>
    <property type="evidence" value="ECO:0007669"/>
    <property type="project" value="UniProtKB-UniRule"/>
</dbReference>
<dbReference type="GO" id="GO:0006420">
    <property type="term" value="P:arginyl-tRNA aminoacylation"/>
    <property type="evidence" value="ECO:0007669"/>
    <property type="project" value="UniProtKB-UniRule"/>
</dbReference>
<dbReference type="CDD" id="cd07956">
    <property type="entry name" value="Anticodon_Ia_Arg"/>
    <property type="match status" value="1"/>
</dbReference>
<dbReference type="CDD" id="cd00671">
    <property type="entry name" value="ArgRS_core"/>
    <property type="match status" value="1"/>
</dbReference>
<dbReference type="FunFam" id="1.10.730.10:FF:000008">
    <property type="entry name" value="Arginine--tRNA ligase"/>
    <property type="match status" value="1"/>
</dbReference>
<dbReference type="FunFam" id="3.30.1360.70:FF:000003">
    <property type="entry name" value="Arginine--tRNA ligase"/>
    <property type="match status" value="1"/>
</dbReference>
<dbReference type="FunFam" id="3.40.50.620:FF:000062">
    <property type="entry name" value="Arginine--tRNA ligase"/>
    <property type="match status" value="1"/>
</dbReference>
<dbReference type="Gene3D" id="3.30.1360.70">
    <property type="entry name" value="Arginyl tRNA synthetase N-terminal domain"/>
    <property type="match status" value="1"/>
</dbReference>
<dbReference type="Gene3D" id="3.40.50.620">
    <property type="entry name" value="HUPs"/>
    <property type="match status" value="1"/>
</dbReference>
<dbReference type="Gene3D" id="1.10.730.10">
    <property type="entry name" value="Isoleucyl-tRNA Synthetase, Domain 1"/>
    <property type="match status" value="1"/>
</dbReference>
<dbReference type="HAMAP" id="MF_00123">
    <property type="entry name" value="Arg_tRNA_synth"/>
    <property type="match status" value="1"/>
</dbReference>
<dbReference type="InterPro" id="IPR001412">
    <property type="entry name" value="aa-tRNA-synth_I_CS"/>
</dbReference>
<dbReference type="InterPro" id="IPR001278">
    <property type="entry name" value="Arg-tRNA-ligase"/>
</dbReference>
<dbReference type="InterPro" id="IPR005148">
    <property type="entry name" value="Arg-tRNA-synth_N"/>
</dbReference>
<dbReference type="InterPro" id="IPR036695">
    <property type="entry name" value="Arg-tRNA-synth_N_sf"/>
</dbReference>
<dbReference type="InterPro" id="IPR035684">
    <property type="entry name" value="ArgRS_core"/>
</dbReference>
<dbReference type="InterPro" id="IPR008909">
    <property type="entry name" value="DALR_anticod-bd"/>
</dbReference>
<dbReference type="InterPro" id="IPR014729">
    <property type="entry name" value="Rossmann-like_a/b/a_fold"/>
</dbReference>
<dbReference type="InterPro" id="IPR009080">
    <property type="entry name" value="tRNAsynth_Ia_anticodon-bd"/>
</dbReference>
<dbReference type="NCBIfam" id="TIGR00456">
    <property type="entry name" value="argS"/>
    <property type="match status" value="1"/>
</dbReference>
<dbReference type="PANTHER" id="PTHR11956:SF5">
    <property type="entry name" value="ARGININE--TRNA LIGASE, CYTOPLASMIC"/>
    <property type="match status" value="1"/>
</dbReference>
<dbReference type="PANTHER" id="PTHR11956">
    <property type="entry name" value="ARGINYL-TRNA SYNTHETASE"/>
    <property type="match status" value="1"/>
</dbReference>
<dbReference type="Pfam" id="PF03485">
    <property type="entry name" value="Arg_tRNA_synt_N"/>
    <property type="match status" value="1"/>
</dbReference>
<dbReference type="Pfam" id="PF05746">
    <property type="entry name" value="DALR_1"/>
    <property type="match status" value="1"/>
</dbReference>
<dbReference type="Pfam" id="PF00750">
    <property type="entry name" value="tRNA-synt_1d"/>
    <property type="match status" value="1"/>
</dbReference>
<dbReference type="PRINTS" id="PR01038">
    <property type="entry name" value="TRNASYNTHARG"/>
</dbReference>
<dbReference type="SMART" id="SM01016">
    <property type="entry name" value="Arg_tRNA_synt_N"/>
    <property type="match status" value="1"/>
</dbReference>
<dbReference type="SMART" id="SM00836">
    <property type="entry name" value="DALR_1"/>
    <property type="match status" value="1"/>
</dbReference>
<dbReference type="SUPFAM" id="SSF47323">
    <property type="entry name" value="Anticodon-binding domain of a subclass of class I aminoacyl-tRNA synthetases"/>
    <property type="match status" value="1"/>
</dbReference>
<dbReference type="SUPFAM" id="SSF55190">
    <property type="entry name" value="Arginyl-tRNA synthetase (ArgRS), N-terminal 'additional' domain"/>
    <property type="match status" value="1"/>
</dbReference>
<dbReference type="SUPFAM" id="SSF52374">
    <property type="entry name" value="Nucleotidylyl transferase"/>
    <property type="match status" value="1"/>
</dbReference>
<dbReference type="PROSITE" id="PS00178">
    <property type="entry name" value="AA_TRNA_LIGASE_I"/>
    <property type="match status" value="1"/>
</dbReference>
<comment type="catalytic activity">
    <reaction evidence="1">
        <text>tRNA(Arg) + L-arginine + ATP = L-arginyl-tRNA(Arg) + AMP + diphosphate</text>
        <dbReference type="Rhea" id="RHEA:20301"/>
        <dbReference type="Rhea" id="RHEA-COMP:9658"/>
        <dbReference type="Rhea" id="RHEA-COMP:9673"/>
        <dbReference type="ChEBI" id="CHEBI:30616"/>
        <dbReference type="ChEBI" id="CHEBI:32682"/>
        <dbReference type="ChEBI" id="CHEBI:33019"/>
        <dbReference type="ChEBI" id="CHEBI:78442"/>
        <dbReference type="ChEBI" id="CHEBI:78513"/>
        <dbReference type="ChEBI" id="CHEBI:456215"/>
        <dbReference type="EC" id="6.1.1.19"/>
    </reaction>
</comment>
<comment type="subunit">
    <text evidence="1">Monomer.</text>
</comment>
<comment type="subcellular location">
    <subcellularLocation>
        <location evidence="1">Cytoplasm</location>
    </subcellularLocation>
</comment>
<comment type="similarity">
    <text evidence="1">Belongs to the class-I aminoacyl-tRNA synthetase family.</text>
</comment>
<protein>
    <recommendedName>
        <fullName evidence="1">Arginine--tRNA ligase</fullName>
        <ecNumber evidence="1">6.1.1.19</ecNumber>
    </recommendedName>
    <alternativeName>
        <fullName evidence="1">Arginyl-tRNA synthetase</fullName>
        <shortName evidence="1">ArgRS</shortName>
    </alternativeName>
</protein>
<feature type="chain" id="PRO_1000203099" description="Arginine--tRNA ligase">
    <location>
        <begin position="1"/>
        <end position="556"/>
    </location>
</feature>
<feature type="short sequence motif" description="'HIGH' region">
    <location>
        <begin position="132"/>
        <end position="142"/>
    </location>
</feature>
<sequence>MNVMQENQIKLIEHIKQGVVQAVGLEEAEVPEILLEVPKDKKHGDYSTNIAMQLARVAKKAPRQIAESIVPELKKDNKLIKEVEIAGPGFINFYLDNAYLTDLVPVILTEDKKYGESDFGKGEKFQIEFVSANPTGDLHLGHARGAAIGDSLANIMKMAGFDVSREYYINDAGNQINNLVLSAEARYFEALGLDSEFPEDGYRGADIISLGKDLAAKYGDKYVHTSEEERRSVFRVDALAFETGKLRADLEEFRVSFDEWFSETSLYEENKVLPALERLRENGYIYEQDGATWLRTTDFEDDKDRVLIKSDGSYTYFLPDIAYHLNKLERGFDVLIDIWGADHHGYIPRMRAAIEALGYSPNQLEVEIIQLVHLFEDGVQVKMSKRTGKSVTMRDLIEEVGLDATRYFFAMRSSDTHMNFDMSLAKSTSNDNPVYYVQYAHARISSILRSGKEQGLEVTKDADMSLLQTEAEYDLLKVLGEFADVVAEAATKRAPHRIVRYLNDLASSFHRFYNSNKVLDMDNLEVTKARLALIKTAQITLRNGLTLLGVSAPEKM</sequence>